<reference key="1">
    <citation type="submission" date="2009-01" db="EMBL/GenBank/DDBJ databases">
        <title>Complete sequence of Chloroflexus sp. Y-400-fl.</title>
        <authorList>
            <consortium name="US DOE Joint Genome Institute"/>
            <person name="Lucas S."/>
            <person name="Copeland A."/>
            <person name="Lapidus A."/>
            <person name="Glavina del Rio T."/>
            <person name="Dalin E."/>
            <person name="Tice H."/>
            <person name="Bruce D."/>
            <person name="Goodwin L."/>
            <person name="Pitluck S."/>
            <person name="Sims D."/>
            <person name="Kiss H."/>
            <person name="Brettin T."/>
            <person name="Detter J.C."/>
            <person name="Han C."/>
            <person name="Larimer F."/>
            <person name="Land M."/>
            <person name="Hauser L."/>
            <person name="Kyrpides N."/>
            <person name="Ovchinnikova G."/>
            <person name="Bryant D.A."/>
            <person name="Richardson P."/>
        </authorList>
    </citation>
    <scope>NUCLEOTIDE SEQUENCE [LARGE SCALE GENOMIC DNA]</scope>
    <source>
        <strain>ATCC 29364 / DSM 637 / Y-400-fl</strain>
    </source>
</reference>
<feature type="chain" id="PRO_0000385829" description="GTPase Obg">
    <location>
        <begin position="1"/>
        <end position="439"/>
    </location>
</feature>
<feature type="domain" description="Obg" evidence="3">
    <location>
        <begin position="5"/>
        <end position="164"/>
    </location>
</feature>
<feature type="domain" description="OBG-type G" evidence="1">
    <location>
        <begin position="165"/>
        <end position="335"/>
    </location>
</feature>
<feature type="domain" description="OCT" evidence="2">
    <location>
        <begin position="356"/>
        <end position="433"/>
    </location>
</feature>
<feature type="binding site" evidence="1">
    <location>
        <begin position="171"/>
        <end position="178"/>
    </location>
    <ligand>
        <name>GTP</name>
        <dbReference type="ChEBI" id="CHEBI:37565"/>
    </ligand>
</feature>
<feature type="binding site" evidence="1">
    <location>
        <position position="178"/>
    </location>
    <ligand>
        <name>Mg(2+)</name>
        <dbReference type="ChEBI" id="CHEBI:18420"/>
    </ligand>
</feature>
<feature type="binding site" evidence="1">
    <location>
        <begin position="196"/>
        <end position="200"/>
    </location>
    <ligand>
        <name>GTP</name>
        <dbReference type="ChEBI" id="CHEBI:37565"/>
    </ligand>
</feature>
<feature type="binding site" evidence="1">
    <location>
        <position position="198"/>
    </location>
    <ligand>
        <name>Mg(2+)</name>
        <dbReference type="ChEBI" id="CHEBI:18420"/>
    </ligand>
</feature>
<feature type="binding site" evidence="1">
    <location>
        <begin position="217"/>
        <end position="220"/>
    </location>
    <ligand>
        <name>GTP</name>
        <dbReference type="ChEBI" id="CHEBI:37565"/>
    </ligand>
</feature>
<feature type="binding site" evidence="1">
    <location>
        <begin position="287"/>
        <end position="290"/>
    </location>
    <ligand>
        <name>GTP</name>
        <dbReference type="ChEBI" id="CHEBI:37565"/>
    </ligand>
</feature>
<feature type="binding site" evidence="1">
    <location>
        <begin position="316"/>
        <end position="318"/>
    </location>
    <ligand>
        <name>GTP</name>
        <dbReference type="ChEBI" id="CHEBI:37565"/>
    </ligand>
</feature>
<sequence length="439" mass="47654">MKTETDFFDQATIVVRAGNGGNGAATFRREKYVPRGGPNGGDGGRGGHVYLIADPEYNTLLHFRYQRKFVAENGGHGGKNAMHGRNGTDVYVPVPPGTVVRATIDGVTYSVDLARPGQRLLAARGGRGGLGNIHFATSTRQAPRLAELGEPGQELTLELELKMLADVGLVGFPNAGKSTLLSVISAARPKIAAYPFTTLTPNLGIVEVGLQRFVVADIPGLIEGAHAGVGLGHDFLRHVERTRLLIHIIDAAGVDGRYPWDDYEQINTELRLYQPELAQRKQVVALNKADLPAAQENLPILRERLPVAPEDLFVISAATGEGIEPLLRRVADLLRADPPPQRDPVDPDEPPLQWPLPEVDENAFTIEREGEAFRVRGIKIERLIAMSNLDQDEALDRIQRVLEASGINEALIAAGVQDGDLVRIGRAELVWDDSGQHAL</sequence>
<evidence type="ECO:0000255" key="1">
    <source>
        <dbReference type="HAMAP-Rule" id="MF_01454"/>
    </source>
</evidence>
<evidence type="ECO:0000255" key="2">
    <source>
        <dbReference type="PROSITE-ProRule" id="PRU01229"/>
    </source>
</evidence>
<evidence type="ECO:0000255" key="3">
    <source>
        <dbReference type="PROSITE-ProRule" id="PRU01231"/>
    </source>
</evidence>
<organism>
    <name type="scientific">Chloroflexus aurantiacus (strain ATCC 29364 / DSM 637 / Y-400-fl)</name>
    <dbReference type="NCBI Taxonomy" id="480224"/>
    <lineage>
        <taxon>Bacteria</taxon>
        <taxon>Bacillati</taxon>
        <taxon>Chloroflexota</taxon>
        <taxon>Chloroflexia</taxon>
        <taxon>Chloroflexales</taxon>
        <taxon>Chloroflexineae</taxon>
        <taxon>Chloroflexaceae</taxon>
        <taxon>Chloroflexus</taxon>
    </lineage>
</organism>
<comment type="function">
    <text evidence="1">An essential GTPase which binds GTP, GDP and possibly (p)ppGpp with moderate affinity, with high nucleotide exchange rates and a fairly low GTP hydrolysis rate. Plays a role in control of the cell cycle, stress response, ribosome biogenesis and in those bacteria that undergo differentiation, in morphogenesis control.</text>
</comment>
<comment type="cofactor">
    <cofactor evidence="1">
        <name>Mg(2+)</name>
        <dbReference type="ChEBI" id="CHEBI:18420"/>
    </cofactor>
</comment>
<comment type="subunit">
    <text evidence="1">Monomer.</text>
</comment>
<comment type="subcellular location">
    <subcellularLocation>
        <location evidence="1">Cytoplasm</location>
    </subcellularLocation>
</comment>
<comment type="similarity">
    <text evidence="1">Belongs to the TRAFAC class OBG-HflX-like GTPase superfamily. OBG GTPase family.</text>
</comment>
<accession>B9LC30</accession>
<gene>
    <name evidence="1" type="primary">obg</name>
    <name type="ordered locus">Chy400_1406</name>
</gene>
<name>OBG_CHLSY</name>
<proteinExistence type="inferred from homology"/>
<protein>
    <recommendedName>
        <fullName evidence="1">GTPase Obg</fullName>
        <ecNumber evidence="1">3.6.5.-</ecNumber>
    </recommendedName>
    <alternativeName>
        <fullName evidence="1">GTP-binding protein Obg</fullName>
    </alternativeName>
</protein>
<dbReference type="EC" id="3.6.5.-" evidence="1"/>
<dbReference type="EMBL" id="CP001364">
    <property type="protein sequence ID" value="ACM52824.1"/>
    <property type="molecule type" value="Genomic_DNA"/>
</dbReference>
<dbReference type="SMR" id="B9LC30"/>
<dbReference type="KEGG" id="chl:Chy400_1406"/>
<dbReference type="HOGENOM" id="CLU_011747_2_1_0"/>
<dbReference type="OrthoDB" id="9807318at2"/>
<dbReference type="GO" id="GO:0005737">
    <property type="term" value="C:cytoplasm"/>
    <property type="evidence" value="ECO:0007669"/>
    <property type="project" value="UniProtKB-SubCell"/>
</dbReference>
<dbReference type="GO" id="GO:0005525">
    <property type="term" value="F:GTP binding"/>
    <property type="evidence" value="ECO:0007669"/>
    <property type="project" value="UniProtKB-UniRule"/>
</dbReference>
<dbReference type="GO" id="GO:0003924">
    <property type="term" value="F:GTPase activity"/>
    <property type="evidence" value="ECO:0007669"/>
    <property type="project" value="UniProtKB-UniRule"/>
</dbReference>
<dbReference type="GO" id="GO:0000287">
    <property type="term" value="F:magnesium ion binding"/>
    <property type="evidence" value="ECO:0007669"/>
    <property type="project" value="InterPro"/>
</dbReference>
<dbReference type="GO" id="GO:0042254">
    <property type="term" value="P:ribosome biogenesis"/>
    <property type="evidence" value="ECO:0007669"/>
    <property type="project" value="UniProtKB-UniRule"/>
</dbReference>
<dbReference type="CDD" id="cd01898">
    <property type="entry name" value="Obg"/>
    <property type="match status" value="1"/>
</dbReference>
<dbReference type="FunFam" id="2.70.210.12:FF:000001">
    <property type="entry name" value="GTPase Obg"/>
    <property type="match status" value="1"/>
</dbReference>
<dbReference type="Gene3D" id="3.30.300.350">
    <property type="entry name" value="GTP-binding protein OBG, C-terminal domain"/>
    <property type="match status" value="1"/>
</dbReference>
<dbReference type="Gene3D" id="2.70.210.12">
    <property type="entry name" value="GTP1/OBG domain"/>
    <property type="match status" value="1"/>
</dbReference>
<dbReference type="Gene3D" id="3.40.50.300">
    <property type="entry name" value="P-loop containing nucleotide triphosphate hydrolases"/>
    <property type="match status" value="1"/>
</dbReference>
<dbReference type="HAMAP" id="MF_01454">
    <property type="entry name" value="GTPase_Obg"/>
    <property type="match status" value="1"/>
</dbReference>
<dbReference type="InterPro" id="IPR031167">
    <property type="entry name" value="G_OBG"/>
</dbReference>
<dbReference type="InterPro" id="IPR006073">
    <property type="entry name" value="GTP-bd"/>
</dbReference>
<dbReference type="InterPro" id="IPR014100">
    <property type="entry name" value="GTP-bd_Obg/CgtA"/>
</dbReference>
<dbReference type="InterPro" id="IPR036346">
    <property type="entry name" value="GTP-bd_prot_GTP1/OBG_C_sf"/>
</dbReference>
<dbReference type="InterPro" id="IPR006074">
    <property type="entry name" value="GTP1-OBG_CS"/>
</dbReference>
<dbReference type="InterPro" id="IPR006169">
    <property type="entry name" value="GTP1_OBG_dom"/>
</dbReference>
<dbReference type="InterPro" id="IPR036726">
    <property type="entry name" value="GTP1_OBG_dom_sf"/>
</dbReference>
<dbReference type="InterPro" id="IPR045086">
    <property type="entry name" value="OBG_GTPase"/>
</dbReference>
<dbReference type="InterPro" id="IPR015349">
    <property type="entry name" value="OCT_dom"/>
</dbReference>
<dbReference type="InterPro" id="IPR027417">
    <property type="entry name" value="P-loop_NTPase"/>
</dbReference>
<dbReference type="NCBIfam" id="TIGR02729">
    <property type="entry name" value="Obg_CgtA"/>
    <property type="match status" value="1"/>
</dbReference>
<dbReference type="NCBIfam" id="TIGR03595">
    <property type="entry name" value="Obg_CgtA_exten"/>
    <property type="match status" value="1"/>
</dbReference>
<dbReference type="NCBIfam" id="NF008954">
    <property type="entry name" value="PRK12296.1"/>
    <property type="match status" value="1"/>
</dbReference>
<dbReference type="NCBIfam" id="NF008955">
    <property type="entry name" value="PRK12297.1"/>
    <property type="match status" value="1"/>
</dbReference>
<dbReference type="NCBIfam" id="NF008956">
    <property type="entry name" value="PRK12299.1"/>
    <property type="match status" value="1"/>
</dbReference>
<dbReference type="PANTHER" id="PTHR11702">
    <property type="entry name" value="DEVELOPMENTALLY REGULATED GTP-BINDING PROTEIN-RELATED"/>
    <property type="match status" value="1"/>
</dbReference>
<dbReference type="PANTHER" id="PTHR11702:SF31">
    <property type="entry name" value="MITOCHONDRIAL RIBOSOME-ASSOCIATED GTPASE 2"/>
    <property type="match status" value="1"/>
</dbReference>
<dbReference type="Pfam" id="PF09269">
    <property type="entry name" value="DUF1967"/>
    <property type="match status" value="1"/>
</dbReference>
<dbReference type="Pfam" id="PF01018">
    <property type="entry name" value="GTP1_OBG"/>
    <property type="match status" value="1"/>
</dbReference>
<dbReference type="Pfam" id="PF01926">
    <property type="entry name" value="MMR_HSR1"/>
    <property type="match status" value="1"/>
</dbReference>
<dbReference type="PRINTS" id="PR00326">
    <property type="entry name" value="GTP1OBG"/>
</dbReference>
<dbReference type="SUPFAM" id="SSF102741">
    <property type="entry name" value="Obg GTP-binding protein C-terminal domain"/>
    <property type="match status" value="1"/>
</dbReference>
<dbReference type="SUPFAM" id="SSF82051">
    <property type="entry name" value="Obg GTP-binding protein N-terminal domain"/>
    <property type="match status" value="1"/>
</dbReference>
<dbReference type="SUPFAM" id="SSF52540">
    <property type="entry name" value="P-loop containing nucleoside triphosphate hydrolases"/>
    <property type="match status" value="1"/>
</dbReference>
<dbReference type="PROSITE" id="PS51710">
    <property type="entry name" value="G_OBG"/>
    <property type="match status" value="1"/>
</dbReference>
<dbReference type="PROSITE" id="PS00905">
    <property type="entry name" value="GTP1_OBG"/>
    <property type="match status" value="1"/>
</dbReference>
<dbReference type="PROSITE" id="PS51883">
    <property type="entry name" value="OBG"/>
    <property type="match status" value="1"/>
</dbReference>
<dbReference type="PROSITE" id="PS51881">
    <property type="entry name" value="OCT"/>
    <property type="match status" value="1"/>
</dbReference>
<keyword id="KW-0963">Cytoplasm</keyword>
<keyword id="KW-0342">GTP-binding</keyword>
<keyword id="KW-0378">Hydrolase</keyword>
<keyword id="KW-0460">Magnesium</keyword>
<keyword id="KW-0479">Metal-binding</keyword>
<keyword id="KW-0547">Nucleotide-binding</keyword>